<protein>
    <recommendedName>
        <fullName evidence="1">ATP-dependent protease ATPase subunit HslU</fullName>
    </recommendedName>
    <alternativeName>
        <fullName evidence="1">Unfoldase HslU</fullName>
    </alternativeName>
</protein>
<name>HSLU_METCA</name>
<proteinExistence type="inferred from homology"/>
<gene>
    <name evidence="1" type="primary">hslU</name>
    <name type="ordered locus">MCA2015</name>
</gene>
<accession>Q606K1</accession>
<sequence>MSQMTPREIVHELDKHIVGQAEAKRAVAIALRNRWRRAQVGAPLRDEITPKNILMIGPTGVGKTEIARRLARLANAPFIKVEATKFTEVGYVGRDVESIIRDLTDAAIKMIRQTETAKVQSRAEAAAEERVLDALVPHASTWNAGEEGDSPARQKFRQKLRAGELNDKEIEIDVSAAPIGVEIMAPPGLEEMSSQLQNLFQNFQAGRTRTRKLRVRDALKLLKEEEAGKMINEEEIKLRAVHAVEQNGIVFLDELDKICKRADYGGPDVSREGVQRDLLPLVEGCTVSTKYGTIRTDHILFIASGAFHLAKPSDLIPELQGRFPIRVELNPLSADDFVRILTEPDASLTAQYAALLATEGVNLEFADSAIRRIAQISWEVNERTENIGARRLHTVLERLLEEISFDAADRSGTSITIDAGYVDAHLGSLALDEDLSRYIL</sequence>
<reference key="1">
    <citation type="journal article" date="2004" name="PLoS Biol.">
        <title>Genomic insights into methanotrophy: the complete genome sequence of Methylococcus capsulatus (Bath).</title>
        <authorList>
            <person name="Ward N.L."/>
            <person name="Larsen O."/>
            <person name="Sakwa J."/>
            <person name="Bruseth L."/>
            <person name="Khouri H.M."/>
            <person name="Durkin A.S."/>
            <person name="Dimitrov G."/>
            <person name="Jiang L."/>
            <person name="Scanlan D."/>
            <person name="Kang K.H."/>
            <person name="Lewis M.R."/>
            <person name="Nelson K.E."/>
            <person name="Methe B.A."/>
            <person name="Wu M."/>
            <person name="Heidelberg J.F."/>
            <person name="Paulsen I.T."/>
            <person name="Fouts D.E."/>
            <person name="Ravel J."/>
            <person name="Tettelin H."/>
            <person name="Ren Q."/>
            <person name="Read T.D."/>
            <person name="DeBoy R.T."/>
            <person name="Seshadri R."/>
            <person name="Salzberg S.L."/>
            <person name="Jensen H.B."/>
            <person name="Birkeland N.K."/>
            <person name="Nelson W.C."/>
            <person name="Dodson R.J."/>
            <person name="Grindhaug S.H."/>
            <person name="Holt I.E."/>
            <person name="Eidhammer I."/>
            <person name="Jonasen I."/>
            <person name="Vanaken S."/>
            <person name="Utterback T.R."/>
            <person name="Feldblyum T.V."/>
            <person name="Fraser C.M."/>
            <person name="Lillehaug J.R."/>
            <person name="Eisen J.A."/>
        </authorList>
    </citation>
    <scope>NUCLEOTIDE SEQUENCE [LARGE SCALE GENOMIC DNA]</scope>
    <source>
        <strain>ATCC 33009 / NCIMB 11132 / Bath</strain>
    </source>
</reference>
<comment type="function">
    <text evidence="1">ATPase subunit of a proteasome-like degradation complex; this subunit has chaperone activity. The binding of ATP and its subsequent hydrolysis by HslU are essential for unfolding of protein substrates subsequently hydrolyzed by HslV. HslU recognizes the N-terminal part of its protein substrates and unfolds these before they are guided to HslV for hydrolysis.</text>
</comment>
<comment type="subunit">
    <text evidence="1">A double ring-shaped homohexamer of HslV is capped on each side by a ring-shaped HslU homohexamer. The assembly of the HslU/HslV complex is dependent on binding of ATP.</text>
</comment>
<comment type="subcellular location">
    <subcellularLocation>
        <location evidence="1">Cytoplasm</location>
    </subcellularLocation>
</comment>
<comment type="similarity">
    <text evidence="1">Belongs to the ClpX chaperone family. HslU subfamily.</text>
</comment>
<organism>
    <name type="scientific">Methylococcus capsulatus (strain ATCC 33009 / NCIMB 11132 / Bath)</name>
    <dbReference type="NCBI Taxonomy" id="243233"/>
    <lineage>
        <taxon>Bacteria</taxon>
        <taxon>Pseudomonadati</taxon>
        <taxon>Pseudomonadota</taxon>
        <taxon>Gammaproteobacteria</taxon>
        <taxon>Methylococcales</taxon>
        <taxon>Methylococcaceae</taxon>
        <taxon>Methylococcus</taxon>
    </lineage>
</organism>
<keyword id="KW-0067">ATP-binding</keyword>
<keyword id="KW-0143">Chaperone</keyword>
<keyword id="KW-0963">Cytoplasm</keyword>
<keyword id="KW-0547">Nucleotide-binding</keyword>
<keyword id="KW-1185">Reference proteome</keyword>
<evidence type="ECO:0000255" key="1">
    <source>
        <dbReference type="HAMAP-Rule" id="MF_00249"/>
    </source>
</evidence>
<dbReference type="EMBL" id="AE017282">
    <property type="protein sequence ID" value="AAU91755.1"/>
    <property type="molecule type" value="Genomic_DNA"/>
</dbReference>
<dbReference type="RefSeq" id="WP_010961260.1">
    <property type="nucleotide sequence ID" value="NC_002977.6"/>
</dbReference>
<dbReference type="SMR" id="Q606K1"/>
<dbReference type="STRING" id="243233.MCA2015"/>
<dbReference type="GeneID" id="88224243"/>
<dbReference type="KEGG" id="mca:MCA2015"/>
<dbReference type="eggNOG" id="COG1220">
    <property type="taxonomic scope" value="Bacteria"/>
</dbReference>
<dbReference type="HOGENOM" id="CLU_033123_0_0_6"/>
<dbReference type="Proteomes" id="UP000006821">
    <property type="component" value="Chromosome"/>
</dbReference>
<dbReference type="GO" id="GO:0009376">
    <property type="term" value="C:HslUV protease complex"/>
    <property type="evidence" value="ECO:0007669"/>
    <property type="project" value="UniProtKB-UniRule"/>
</dbReference>
<dbReference type="GO" id="GO:0005524">
    <property type="term" value="F:ATP binding"/>
    <property type="evidence" value="ECO:0007669"/>
    <property type="project" value="UniProtKB-UniRule"/>
</dbReference>
<dbReference type="GO" id="GO:0016887">
    <property type="term" value="F:ATP hydrolysis activity"/>
    <property type="evidence" value="ECO:0007669"/>
    <property type="project" value="InterPro"/>
</dbReference>
<dbReference type="GO" id="GO:0008233">
    <property type="term" value="F:peptidase activity"/>
    <property type="evidence" value="ECO:0007669"/>
    <property type="project" value="InterPro"/>
</dbReference>
<dbReference type="GO" id="GO:0036402">
    <property type="term" value="F:proteasome-activating activity"/>
    <property type="evidence" value="ECO:0007669"/>
    <property type="project" value="UniProtKB-UniRule"/>
</dbReference>
<dbReference type="GO" id="GO:0043335">
    <property type="term" value="P:protein unfolding"/>
    <property type="evidence" value="ECO:0007669"/>
    <property type="project" value="UniProtKB-UniRule"/>
</dbReference>
<dbReference type="GO" id="GO:0051603">
    <property type="term" value="P:proteolysis involved in protein catabolic process"/>
    <property type="evidence" value="ECO:0007669"/>
    <property type="project" value="TreeGrafter"/>
</dbReference>
<dbReference type="CDD" id="cd19498">
    <property type="entry name" value="RecA-like_HslU"/>
    <property type="match status" value="1"/>
</dbReference>
<dbReference type="FunFam" id="3.40.50.300:FF:000213">
    <property type="entry name" value="ATP-dependent protease ATPase subunit HslU"/>
    <property type="match status" value="1"/>
</dbReference>
<dbReference type="FunFam" id="3.40.50.300:FF:000220">
    <property type="entry name" value="ATP-dependent protease ATPase subunit HslU"/>
    <property type="match status" value="1"/>
</dbReference>
<dbReference type="Gene3D" id="1.10.8.60">
    <property type="match status" value="1"/>
</dbReference>
<dbReference type="Gene3D" id="3.40.50.300">
    <property type="entry name" value="P-loop containing nucleotide triphosphate hydrolases"/>
    <property type="match status" value="2"/>
</dbReference>
<dbReference type="HAMAP" id="MF_00249">
    <property type="entry name" value="HslU"/>
    <property type="match status" value="1"/>
</dbReference>
<dbReference type="InterPro" id="IPR003593">
    <property type="entry name" value="AAA+_ATPase"/>
</dbReference>
<dbReference type="InterPro" id="IPR050052">
    <property type="entry name" value="ATP-dep_Clp_protease_ClpX"/>
</dbReference>
<dbReference type="InterPro" id="IPR003959">
    <property type="entry name" value="ATPase_AAA_core"/>
</dbReference>
<dbReference type="InterPro" id="IPR019489">
    <property type="entry name" value="Clp_ATPase_C"/>
</dbReference>
<dbReference type="InterPro" id="IPR004491">
    <property type="entry name" value="HslU"/>
</dbReference>
<dbReference type="InterPro" id="IPR027417">
    <property type="entry name" value="P-loop_NTPase"/>
</dbReference>
<dbReference type="NCBIfam" id="TIGR00390">
    <property type="entry name" value="hslU"/>
    <property type="match status" value="1"/>
</dbReference>
<dbReference type="NCBIfam" id="NF003544">
    <property type="entry name" value="PRK05201.1"/>
    <property type="match status" value="1"/>
</dbReference>
<dbReference type="PANTHER" id="PTHR48102">
    <property type="entry name" value="ATP-DEPENDENT CLP PROTEASE ATP-BINDING SUBUNIT CLPX-LIKE, MITOCHONDRIAL-RELATED"/>
    <property type="match status" value="1"/>
</dbReference>
<dbReference type="PANTHER" id="PTHR48102:SF3">
    <property type="entry name" value="ATP-DEPENDENT PROTEASE ATPASE SUBUNIT HSLU"/>
    <property type="match status" value="1"/>
</dbReference>
<dbReference type="Pfam" id="PF00004">
    <property type="entry name" value="AAA"/>
    <property type="match status" value="1"/>
</dbReference>
<dbReference type="Pfam" id="PF07724">
    <property type="entry name" value="AAA_2"/>
    <property type="match status" value="1"/>
</dbReference>
<dbReference type="SMART" id="SM00382">
    <property type="entry name" value="AAA"/>
    <property type="match status" value="1"/>
</dbReference>
<dbReference type="SMART" id="SM01086">
    <property type="entry name" value="ClpB_D2-small"/>
    <property type="match status" value="1"/>
</dbReference>
<dbReference type="SUPFAM" id="SSF52540">
    <property type="entry name" value="P-loop containing nucleoside triphosphate hydrolases"/>
    <property type="match status" value="1"/>
</dbReference>
<feature type="chain" id="PRO_0000160524" description="ATP-dependent protease ATPase subunit HslU">
    <location>
        <begin position="1"/>
        <end position="440"/>
    </location>
</feature>
<feature type="binding site" evidence="1">
    <location>
        <position position="18"/>
    </location>
    <ligand>
        <name>ATP</name>
        <dbReference type="ChEBI" id="CHEBI:30616"/>
    </ligand>
</feature>
<feature type="binding site" evidence="1">
    <location>
        <begin position="60"/>
        <end position="65"/>
    </location>
    <ligand>
        <name>ATP</name>
        <dbReference type="ChEBI" id="CHEBI:30616"/>
    </ligand>
</feature>
<feature type="binding site" evidence="1">
    <location>
        <position position="253"/>
    </location>
    <ligand>
        <name>ATP</name>
        <dbReference type="ChEBI" id="CHEBI:30616"/>
    </ligand>
</feature>
<feature type="binding site" evidence="1">
    <location>
        <position position="318"/>
    </location>
    <ligand>
        <name>ATP</name>
        <dbReference type="ChEBI" id="CHEBI:30616"/>
    </ligand>
</feature>
<feature type="binding site" evidence="1">
    <location>
        <position position="390"/>
    </location>
    <ligand>
        <name>ATP</name>
        <dbReference type="ChEBI" id="CHEBI:30616"/>
    </ligand>
</feature>